<organism>
    <name type="scientific">Rhizobium etli (strain ATCC 51251 / DSM 11541 / JCM 21823 / NBRC 15573 / CFN 42)</name>
    <dbReference type="NCBI Taxonomy" id="347834"/>
    <lineage>
        <taxon>Bacteria</taxon>
        <taxon>Pseudomonadati</taxon>
        <taxon>Pseudomonadota</taxon>
        <taxon>Alphaproteobacteria</taxon>
        <taxon>Hyphomicrobiales</taxon>
        <taxon>Rhizobiaceae</taxon>
        <taxon>Rhizobium/Agrobacterium group</taxon>
        <taxon>Rhizobium</taxon>
    </lineage>
</organism>
<keyword id="KW-0963">Cytoplasm</keyword>
<keyword id="KW-0378">Hydrolase</keyword>
<keyword id="KW-0645">Protease</keyword>
<keyword id="KW-1185">Reference proteome</keyword>
<keyword id="KW-0720">Serine protease</keyword>
<protein>
    <recommendedName>
        <fullName evidence="1">ATP-dependent Clp protease proteolytic subunit 2</fullName>
        <ecNumber evidence="1">3.4.21.92</ecNumber>
    </recommendedName>
    <alternativeName>
        <fullName evidence="1">Endopeptidase Clp 2</fullName>
    </alternativeName>
</protein>
<accession>Q2K9U7</accession>
<gene>
    <name evidence="1" type="primary">clpP2</name>
    <name type="ordered locus">RHE_CH01587</name>
</gene>
<feature type="chain" id="PRO_0000252833" description="ATP-dependent Clp protease proteolytic subunit 2">
    <location>
        <begin position="1"/>
        <end position="209"/>
    </location>
</feature>
<feature type="active site" description="Nucleophile" evidence="1">
    <location>
        <position position="106"/>
    </location>
</feature>
<feature type="active site" evidence="1">
    <location>
        <position position="131"/>
    </location>
</feature>
<name>CLPP2_RHIEC</name>
<sequence>MRNPVDTAMALVPMVVEQTNRGERSYDIYSRLLKERIIFLTGAVEDHMATLVCAQLLFLEAENPKKEIALYINSPGGVVTAGMAIYDTMQFIKPAVSTLCIGQAASMGSLLLAAGHKDMRFATPNSRIMVHQPSGGFQGQASDIERHARDILKMKRRLNEVYVKHTGRTYEEVEKTLDRDHFMDADEAQGWGVIDKVLTSRLEMEGEQA</sequence>
<reference key="1">
    <citation type="journal article" date="2006" name="Proc. Natl. Acad. Sci. U.S.A.">
        <title>The partitioned Rhizobium etli genome: genetic and metabolic redundancy in seven interacting replicons.</title>
        <authorList>
            <person name="Gonzalez V."/>
            <person name="Santamaria R.I."/>
            <person name="Bustos P."/>
            <person name="Hernandez-Gonzalez I."/>
            <person name="Medrano-Soto A."/>
            <person name="Moreno-Hagelsieb G."/>
            <person name="Janga S.C."/>
            <person name="Ramirez M.A."/>
            <person name="Jimenez-Jacinto V."/>
            <person name="Collado-Vides J."/>
            <person name="Davila G."/>
        </authorList>
    </citation>
    <scope>NUCLEOTIDE SEQUENCE [LARGE SCALE GENOMIC DNA]</scope>
    <source>
        <strain>ATCC 51251 / DSM 11541 / JCM 21823 / NBRC 15573 / CFN 42</strain>
    </source>
</reference>
<dbReference type="EC" id="3.4.21.92" evidence="1"/>
<dbReference type="EMBL" id="CP000133">
    <property type="protein sequence ID" value="ABC90389.1"/>
    <property type="molecule type" value="Genomic_DNA"/>
</dbReference>
<dbReference type="SMR" id="Q2K9U7"/>
<dbReference type="MEROPS" id="S14.001"/>
<dbReference type="KEGG" id="ret:RHE_CH01587"/>
<dbReference type="eggNOG" id="COG0740">
    <property type="taxonomic scope" value="Bacteria"/>
</dbReference>
<dbReference type="HOGENOM" id="CLU_058707_3_2_5"/>
<dbReference type="OrthoDB" id="9802800at2"/>
<dbReference type="Proteomes" id="UP000001936">
    <property type="component" value="Chromosome"/>
</dbReference>
<dbReference type="GO" id="GO:0005737">
    <property type="term" value="C:cytoplasm"/>
    <property type="evidence" value="ECO:0007669"/>
    <property type="project" value="UniProtKB-SubCell"/>
</dbReference>
<dbReference type="GO" id="GO:0009368">
    <property type="term" value="C:endopeptidase Clp complex"/>
    <property type="evidence" value="ECO:0007669"/>
    <property type="project" value="TreeGrafter"/>
</dbReference>
<dbReference type="GO" id="GO:0004176">
    <property type="term" value="F:ATP-dependent peptidase activity"/>
    <property type="evidence" value="ECO:0007669"/>
    <property type="project" value="InterPro"/>
</dbReference>
<dbReference type="GO" id="GO:0051117">
    <property type="term" value="F:ATPase binding"/>
    <property type="evidence" value="ECO:0007669"/>
    <property type="project" value="TreeGrafter"/>
</dbReference>
<dbReference type="GO" id="GO:0004252">
    <property type="term" value="F:serine-type endopeptidase activity"/>
    <property type="evidence" value="ECO:0007669"/>
    <property type="project" value="UniProtKB-UniRule"/>
</dbReference>
<dbReference type="GO" id="GO:0006515">
    <property type="term" value="P:protein quality control for misfolded or incompletely synthesized proteins"/>
    <property type="evidence" value="ECO:0007669"/>
    <property type="project" value="TreeGrafter"/>
</dbReference>
<dbReference type="CDD" id="cd07017">
    <property type="entry name" value="S14_ClpP_2"/>
    <property type="match status" value="1"/>
</dbReference>
<dbReference type="FunFam" id="3.90.226.10:FF:000001">
    <property type="entry name" value="ATP-dependent Clp protease proteolytic subunit"/>
    <property type="match status" value="1"/>
</dbReference>
<dbReference type="Gene3D" id="3.90.226.10">
    <property type="entry name" value="2-enoyl-CoA Hydratase, Chain A, domain 1"/>
    <property type="match status" value="1"/>
</dbReference>
<dbReference type="HAMAP" id="MF_00444">
    <property type="entry name" value="ClpP"/>
    <property type="match status" value="1"/>
</dbReference>
<dbReference type="InterPro" id="IPR001907">
    <property type="entry name" value="ClpP"/>
</dbReference>
<dbReference type="InterPro" id="IPR029045">
    <property type="entry name" value="ClpP/crotonase-like_dom_sf"/>
</dbReference>
<dbReference type="InterPro" id="IPR023562">
    <property type="entry name" value="ClpP/TepA"/>
</dbReference>
<dbReference type="InterPro" id="IPR033135">
    <property type="entry name" value="ClpP_His_AS"/>
</dbReference>
<dbReference type="InterPro" id="IPR018215">
    <property type="entry name" value="ClpP_Ser_AS"/>
</dbReference>
<dbReference type="NCBIfam" id="TIGR00493">
    <property type="entry name" value="clpP"/>
    <property type="match status" value="1"/>
</dbReference>
<dbReference type="NCBIfam" id="NF001368">
    <property type="entry name" value="PRK00277.1"/>
    <property type="match status" value="1"/>
</dbReference>
<dbReference type="NCBIfam" id="NF009205">
    <property type="entry name" value="PRK12553.1"/>
    <property type="match status" value="1"/>
</dbReference>
<dbReference type="PANTHER" id="PTHR10381">
    <property type="entry name" value="ATP-DEPENDENT CLP PROTEASE PROTEOLYTIC SUBUNIT"/>
    <property type="match status" value="1"/>
</dbReference>
<dbReference type="PANTHER" id="PTHR10381:SF70">
    <property type="entry name" value="ATP-DEPENDENT CLP PROTEASE PROTEOLYTIC SUBUNIT"/>
    <property type="match status" value="1"/>
</dbReference>
<dbReference type="Pfam" id="PF00574">
    <property type="entry name" value="CLP_protease"/>
    <property type="match status" value="1"/>
</dbReference>
<dbReference type="PRINTS" id="PR00127">
    <property type="entry name" value="CLPPROTEASEP"/>
</dbReference>
<dbReference type="SUPFAM" id="SSF52096">
    <property type="entry name" value="ClpP/crotonase"/>
    <property type="match status" value="1"/>
</dbReference>
<dbReference type="PROSITE" id="PS00382">
    <property type="entry name" value="CLP_PROTEASE_HIS"/>
    <property type="match status" value="1"/>
</dbReference>
<dbReference type="PROSITE" id="PS00381">
    <property type="entry name" value="CLP_PROTEASE_SER"/>
    <property type="match status" value="1"/>
</dbReference>
<comment type="function">
    <text evidence="1">Cleaves peptides in various proteins in a process that requires ATP hydrolysis. Has a chymotrypsin-like activity. Plays a major role in the degradation of misfolded proteins.</text>
</comment>
<comment type="catalytic activity">
    <reaction evidence="1">
        <text>Hydrolysis of proteins to small peptides in the presence of ATP and magnesium. alpha-casein is the usual test substrate. In the absence of ATP, only oligopeptides shorter than five residues are hydrolyzed (such as succinyl-Leu-Tyr-|-NHMec, and Leu-Tyr-Leu-|-Tyr-Trp, in which cleavage of the -Tyr-|-Leu- and -Tyr-|-Trp bonds also occurs).</text>
        <dbReference type="EC" id="3.4.21.92"/>
    </reaction>
</comment>
<comment type="subunit">
    <text evidence="1">Fourteen ClpP subunits assemble into 2 heptameric rings which stack back to back to give a disk-like structure with a central cavity, resembling the structure of eukaryotic proteasomes.</text>
</comment>
<comment type="subcellular location">
    <subcellularLocation>
        <location evidence="1">Cytoplasm</location>
    </subcellularLocation>
</comment>
<comment type="similarity">
    <text evidence="1">Belongs to the peptidase S14 family.</text>
</comment>
<evidence type="ECO:0000255" key="1">
    <source>
        <dbReference type="HAMAP-Rule" id="MF_00444"/>
    </source>
</evidence>
<proteinExistence type="inferred from homology"/>